<keyword id="KW-0028">Amino-acid biosynthesis</keyword>
<keyword id="KW-0963">Cytoplasm</keyword>
<keyword id="KW-0220">Diaminopimelate biosynthesis</keyword>
<keyword id="KW-0457">Lysine biosynthesis</keyword>
<keyword id="KW-0520">NAD</keyword>
<keyword id="KW-0521">NADP</keyword>
<keyword id="KW-0560">Oxidoreductase</keyword>
<feature type="chain" id="PRO_1000008568" description="4-hydroxy-tetrahydrodipicolinate reductase">
    <location>
        <begin position="1"/>
        <end position="270"/>
    </location>
</feature>
<feature type="active site" description="Proton donor/acceptor" evidence="1">
    <location>
        <position position="156"/>
    </location>
</feature>
<feature type="active site" description="Proton donor" evidence="1">
    <location>
        <position position="160"/>
    </location>
</feature>
<feature type="binding site" evidence="1">
    <location>
        <begin position="9"/>
        <end position="14"/>
    </location>
    <ligand>
        <name>NAD(+)</name>
        <dbReference type="ChEBI" id="CHEBI:57540"/>
    </ligand>
</feature>
<feature type="binding site" evidence="1">
    <location>
        <position position="35"/>
    </location>
    <ligand>
        <name>NAD(+)</name>
        <dbReference type="ChEBI" id="CHEBI:57540"/>
    </ligand>
</feature>
<feature type="binding site" evidence="1">
    <location>
        <position position="36"/>
    </location>
    <ligand>
        <name>NADP(+)</name>
        <dbReference type="ChEBI" id="CHEBI:58349"/>
    </ligand>
</feature>
<feature type="binding site" evidence="1">
    <location>
        <begin position="99"/>
        <end position="101"/>
    </location>
    <ligand>
        <name>NAD(+)</name>
        <dbReference type="ChEBI" id="CHEBI:57540"/>
    </ligand>
</feature>
<feature type="binding site" evidence="1">
    <location>
        <begin position="123"/>
        <end position="126"/>
    </location>
    <ligand>
        <name>NAD(+)</name>
        <dbReference type="ChEBI" id="CHEBI:57540"/>
    </ligand>
</feature>
<feature type="binding site" evidence="1">
    <location>
        <position position="157"/>
    </location>
    <ligand>
        <name>(S)-2,3,4,5-tetrahydrodipicolinate</name>
        <dbReference type="ChEBI" id="CHEBI:16845"/>
    </ligand>
</feature>
<feature type="binding site" evidence="1">
    <location>
        <begin position="166"/>
        <end position="167"/>
    </location>
    <ligand>
        <name>(S)-2,3,4,5-tetrahydrodipicolinate</name>
        <dbReference type="ChEBI" id="CHEBI:16845"/>
    </ligand>
</feature>
<reference key="1">
    <citation type="journal article" date="2007" name="Genome Biol.">
        <title>Characterization and modeling of the Haemophilus influenzae core and supragenomes based on the complete genomic sequences of Rd and 12 clinical nontypeable strains.</title>
        <authorList>
            <person name="Hogg J.S."/>
            <person name="Hu F.Z."/>
            <person name="Janto B."/>
            <person name="Boissy R."/>
            <person name="Hayes J."/>
            <person name="Keefe R."/>
            <person name="Post J.C."/>
            <person name="Ehrlich G.D."/>
        </authorList>
    </citation>
    <scope>NUCLEOTIDE SEQUENCE [LARGE SCALE GENOMIC DNA]</scope>
    <source>
        <strain>PittGG</strain>
    </source>
</reference>
<dbReference type="EC" id="1.17.1.8" evidence="1"/>
<dbReference type="EMBL" id="CP000672">
    <property type="protein sequence ID" value="ABQ99365.1"/>
    <property type="molecule type" value="Genomic_DNA"/>
</dbReference>
<dbReference type="SMR" id="A5UF10"/>
<dbReference type="KEGG" id="hiq:CGSHiGG_01420"/>
<dbReference type="HOGENOM" id="CLU_047479_2_1_6"/>
<dbReference type="UniPathway" id="UPA00034">
    <property type="reaction ID" value="UER00018"/>
</dbReference>
<dbReference type="Proteomes" id="UP000001990">
    <property type="component" value="Chromosome"/>
</dbReference>
<dbReference type="GO" id="GO:0005829">
    <property type="term" value="C:cytosol"/>
    <property type="evidence" value="ECO:0007669"/>
    <property type="project" value="TreeGrafter"/>
</dbReference>
<dbReference type="GO" id="GO:0008839">
    <property type="term" value="F:4-hydroxy-tetrahydrodipicolinate reductase"/>
    <property type="evidence" value="ECO:0007669"/>
    <property type="project" value="UniProtKB-EC"/>
</dbReference>
<dbReference type="GO" id="GO:0051287">
    <property type="term" value="F:NAD binding"/>
    <property type="evidence" value="ECO:0007669"/>
    <property type="project" value="UniProtKB-UniRule"/>
</dbReference>
<dbReference type="GO" id="GO:0050661">
    <property type="term" value="F:NADP binding"/>
    <property type="evidence" value="ECO:0007669"/>
    <property type="project" value="UniProtKB-UniRule"/>
</dbReference>
<dbReference type="GO" id="GO:0016726">
    <property type="term" value="F:oxidoreductase activity, acting on CH or CH2 groups, NAD or NADP as acceptor"/>
    <property type="evidence" value="ECO:0007669"/>
    <property type="project" value="UniProtKB-UniRule"/>
</dbReference>
<dbReference type="GO" id="GO:0019877">
    <property type="term" value="P:diaminopimelate biosynthetic process"/>
    <property type="evidence" value="ECO:0007669"/>
    <property type="project" value="UniProtKB-UniRule"/>
</dbReference>
<dbReference type="GO" id="GO:0009089">
    <property type="term" value="P:lysine biosynthetic process via diaminopimelate"/>
    <property type="evidence" value="ECO:0007669"/>
    <property type="project" value="UniProtKB-UniRule"/>
</dbReference>
<dbReference type="CDD" id="cd02274">
    <property type="entry name" value="DHDPR_N"/>
    <property type="match status" value="1"/>
</dbReference>
<dbReference type="FunFam" id="3.30.360.10:FF:000004">
    <property type="entry name" value="4-hydroxy-tetrahydrodipicolinate reductase"/>
    <property type="match status" value="1"/>
</dbReference>
<dbReference type="FunFam" id="3.40.50.720:FF:000048">
    <property type="entry name" value="4-hydroxy-tetrahydrodipicolinate reductase"/>
    <property type="match status" value="1"/>
</dbReference>
<dbReference type="Gene3D" id="3.30.360.10">
    <property type="entry name" value="Dihydrodipicolinate Reductase, domain 2"/>
    <property type="match status" value="1"/>
</dbReference>
<dbReference type="Gene3D" id="3.40.50.720">
    <property type="entry name" value="NAD(P)-binding Rossmann-like Domain"/>
    <property type="match status" value="1"/>
</dbReference>
<dbReference type="HAMAP" id="MF_00102">
    <property type="entry name" value="DapB"/>
    <property type="match status" value="1"/>
</dbReference>
<dbReference type="InterPro" id="IPR022663">
    <property type="entry name" value="DapB_C"/>
</dbReference>
<dbReference type="InterPro" id="IPR000846">
    <property type="entry name" value="DapB_N"/>
</dbReference>
<dbReference type="InterPro" id="IPR022664">
    <property type="entry name" value="DapB_N_CS"/>
</dbReference>
<dbReference type="InterPro" id="IPR023940">
    <property type="entry name" value="DHDPR_bac"/>
</dbReference>
<dbReference type="InterPro" id="IPR036291">
    <property type="entry name" value="NAD(P)-bd_dom_sf"/>
</dbReference>
<dbReference type="NCBIfam" id="TIGR00036">
    <property type="entry name" value="dapB"/>
    <property type="match status" value="1"/>
</dbReference>
<dbReference type="PANTHER" id="PTHR20836:SF0">
    <property type="entry name" value="4-HYDROXY-TETRAHYDRODIPICOLINATE REDUCTASE 1, CHLOROPLASTIC-RELATED"/>
    <property type="match status" value="1"/>
</dbReference>
<dbReference type="PANTHER" id="PTHR20836">
    <property type="entry name" value="DIHYDRODIPICOLINATE REDUCTASE"/>
    <property type="match status" value="1"/>
</dbReference>
<dbReference type="Pfam" id="PF05173">
    <property type="entry name" value="DapB_C"/>
    <property type="match status" value="1"/>
</dbReference>
<dbReference type="Pfam" id="PF01113">
    <property type="entry name" value="DapB_N"/>
    <property type="match status" value="1"/>
</dbReference>
<dbReference type="PIRSF" id="PIRSF000161">
    <property type="entry name" value="DHPR"/>
    <property type="match status" value="1"/>
</dbReference>
<dbReference type="SUPFAM" id="SSF55347">
    <property type="entry name" value="Glyceraldehyde-3-phosphate dehydrogenase-like, C-terminal domain"/>
    <property type="match status" value="1"/>
</dbReference>
<dbReference type="SUPFAM" id="SSF51735">
    <property type="entry name" value="NAD(P)-binding Rossmann-fold domains"/>
    <property type="match status" value="1"/>
</dbReference>
<dbReference type="PROSITE" id="PS01298">
    <property type="entry name" value="DAPB"/>
    <property type="match status" value="1"/>
</dbReference>
<organism>
    <name type="scientific">Haemophilus influenzae (strain PittGG)</name>
    <dbReference type="NCBI Taxonomy" id="374931"/>
    <lineage>
        <taxon>Bacteria</taxon>
        <taxon>Pseudomonadati</taxon>
        <taxon>Pseudomonadota</taxon>
        <taxon>Gammaproteobacteria</taxon>
        <taxon>Pasteurellales</taxon>
        <taxon>Pasteurellaceae</taxon>
        <taxon>Haemophilus</taxon>
    </lineage>
</organism>
<proteinExistence type="inferred from homology"/>
<name>DAPB_HAEIG</name>
<sequence length="270" mass="28938">MTLKIAIAGAGGRMGRQLIQAVHSAEGVELGAAFERKGSSLVGTDAGELAGIGHLGVAVSDDLESQKDKFDLLIDFTRPEGTLEHIAFCVANNKKMVIGTTGFDENGKTAIKAASDKIAIVFASNFSVGVNLVFKLLEKAAKVMGDYCDIEVIEAHHRHKVDAPSGTALSMGEHIAKTLGRDLKTHGVFCREGITGERKRDEIGFSTIRASDVVGEHTVWFADIGERVEISHKASSRMTFANGAVRAGKWLENKANGLFDMTDVLDLNNL</sequence>
<comment type="function">
    <text evidence="1">Catalyzes the conversion of 4-hydroxy-tetrahydrodipicolinate (HTPA) to tetrahydrodipicolinate.</text>
</comment>
<comment type="catalytic activity">
    <reaction evidence="1">
        <text>(S)-2,3,4,5-tetrahydrodipicolinate + NAD(+) + H2O = (2S,4S)-4-hydroxy-2,3,4,5-tetrahydrodipicolinate + NADH + H(+)</text>
        <dbReference type="Rhea" id="RHEA:35323"/>
        <dbReference type="ChEBI" id="CHEBI:15377"/>
        <dbReference type="ChEBI" id="CHEBI:15378"/>
        <dbReference type="ChEBI" id="CHEBI:16845"/>
        <dbReference type="ChEBI" id="CHEBI:57540"/>
        <dbReference type="ChEBI" id="CHEBI:57945"/>
        <dbReference type="ChEBI" id="CHEBI:67139"/>
        <dbReference type="EC" id="1.17.1.8"/>
    </reaction>
</comment>
<comment type="catalytic activity">
    <reaction evidence="1">
        <text>(S)-2,3,4,5-tetrahydrodipicolinate + NADP(+) + H2O = (2S,4S)-4-hydroxy-2,3,4,5-tetrahydrodipicolinate + NADPH + H(+)</text>
        <dbReference type="Rhea" id="RHEA:35331"/>
        <dbReference type="ChEBI" id="CHEBI:15377"/>
        <dbReference type="ChEBI" id="CHEBI:15378"/>
        <dbReference type="ChEBI" id="CHEBI:16845"/>
        <dbReference type="ChEBI" id="CHEBI:57783"/>
        <dbReference type="ChEBI" id="CHEBI:58349"/>
        <dbReference type="ChEBI" id="CHEBI:67139"/>
        <dbReference type="EC" id="1.17.1.8"/>
    </reaction>
</comment>
<comment type="pathway">
    <text evidence="1">Amino-acid biosynthesis; L-lysine biosynthesis via DAP pathway; (S)-tetrahydrodipicolinate from L-aspartate: step 4/4.</text>
</comment>
<comment type="subcellular location">
    <subcellularLocation>
        <location evidence="1">Cytoplasm</location>
    </subcellularLocation>
</comment>
<comment type="similarity">
    <text evidence="1">Belongs to the DapB family.</text>
</comment>
<comment type="caution">
    <text evidence="2">Was originally thought to be a dihydrodipicolinate reductase (DHDPR), catalyzing the conversion of dihydrodipicolinate to tetrahydrodipicolinate. However, it was shown in E.coli that the substrate of the enzymatic reaction is not dihydrodipicolinate (DHDP) but in fact (2S,4S)-4-hydroxy-2,3,4,5-tetrahydrodipicolinic acid (HTPA), the product released by the DapA-catalyzed reaction.</text>
</comment>
<evidence type="ECO:0000255" key="1">
    <source>
        <dbReference type="HAMAP-Rule" id="MF_00102"/>
    </source>
</evidence>
<evidence type="ECO:0000305" key="2"/>
<protein>
    <recommendedName>
        <fullName evidence="1">4-hydroxy-tetrahydrodipicolinate reductase</fullName>
        <shortName evidence="1">HTPA reductase</shortName>
        <ecNumber evidence="1">1.17.1.8</ecNumber>
    </recommendedName>
</protein>
<accession>A5UF10</accession>
<gene>
    <name evidence="1" type="primary">dapB</name>
    <name type="ordered locus">CGSHiGG_01420</name>
</gene>